<feature type="chain" id="PRO_1000005409" description="NAD kinase">
    <location>
        <begin position="1"/>
        <end position="296"/>
    </location>
</feature>
<feature type="active site" description="Proton acceptor" evidence="1">
    <location>
        <position position="73"/>
    </location>
</feature>
<feature type="binding site" evidence="1">
    <location>
        <begin position="73"/>
        <end position="74"/>
    </location>
    <ligand>
        <name>NAD(+)</name>
        <dbReference type="ChEBI" id="CHEBI:57540"/>
    </ligand>
</feature>
<feature type="binding site" evidence="1">
    <location>
        <position position="78"/>
    </location>
    <ligand>
        <name>NAD(+)</name>
        <dbReference type="ChEBI" id="CHEBI:57540"/>
    </ligand>
</feature>
<feature type="binding site" evidence="1">
    <location>
        <begin position="151"/>
        <end position="152"/>
    </location>
    <ligand>
        <name>NAD(+)</name>
        <dbReference type="ChEBI" id="CHEBI:57540"/>
    </ligand>
</feature>
<feature type="binding site" evidence="1">
    <location>
        <position position="178"/>
    </location>
    <ligand>
        <name>NAD(+)</name>
        <dbReference type="ChEBI" id="CHEBI:57540"/>
    </ligand>
</feature>
<feature type="binding site" evidence="1">
    <location>
        <position position="180"/>
    </location>
    <ligand>
        <name>NAD(+)</name>
        <dbReference type="ChEBI" id="CHEBI:57540"/>
    </ligand>
</feature>
<feature type="binding site" evidence="1">
    <location>
        <begin position="191"/>
        <end position="196"/>
    </location>
    <ligand>
        <name>NAD(+)</name>
        <dbReference type="ChEBI" id="CHEBI:57540"/>
    </ligand>
</feature>
<accession>A0Q7Q7</accession>
<reference key="1">
    <citation type="journal article" date="2007" name="Genome Biol.">
        <title>Comparison of Francisella tularensis genomes reveals evolutionary events associated with the emergence of human pathogenic strains.</title>
        <authorList>
            <person name="Rohmer L."/>
            <person name="Fong C."/>
            <person name="Abmayr S."/>
            <person name="Wasnick M."/>
            <person name="Larson Freeman T.J."/>
            <person name="Radey M."/>
            <person name="Guina T."/>
            <person name="Svensson K."/>
            <person name="Hayden H.S."/>
            <person name="Jacobs M."/>
            <person name="Gallagher L.A."/>
            <person name="Manoil C."/>
            <person name="Ernst R.K."/>
            <person name="Drees B."/>
            <person name="Buckley D."/>
            <person name="Haugen E."/>
            <person name="Bovee D."/>
            <person name="Zhou Y."/>
            <person name="Chang J."/>
            <person name="Levy R."/>
            <person name="Lim R."/>
            <person name="Gillett W."/>
            <person name="Guenthener D."/>
            <person name="Kang A."/>
            <person name="Shaffer S.A."/>
            <person name="Taylor G."/>
            <person name="Chen J."/>
            <person name="Gallis B."/>
            <person name="D'Argenio D.A."/>
            <person name="Forsman M."/>
            <person name="Olson M.V."/>
            <person name="Goodlett D.R."/>
            <person name="Kaul R."/>
            <person name="Miller S.I."/>
            <person name="Brittnacher M.J."/>
        </authorList>
    </citation>
    <scope>NUCLEOTIDE SEQUENCE [LARGE SCALE GENOMIC DNA]</scope>
    <source>
        <strain>U112</strain>
    </source>
</reference>
<protein>
    <recommendedName>
        <fullName evidence="1">NAD kinase</fullName>
        <ecNumber evidence="1">2.7.1.23</ecNumber>
    </recommendedName>
    <alternativeName>
        <fullName evidence="1">ATP-dependent NAD kinase</fullName>
    </alternativeName>
</protein>
<dbReference type="EC" id="2.7.1.23" evidence="1"/>
<dbReference type="EMBL" id="CP000439">
    <property type="protein sequence ID" value="ABK90272.1"/>
    <property type="molecule type" value="Genomic_DNA"/>
</dbReference>
<dbReference type="RefSeq" id="WP_003040301.1">
    <property type="nucleotide sequence ID" value="NC_008601.1"/>
</dbReference>
<dbReference type="SMR" id="A0Q7Q7"/>
<dbReference type="KEGG" id="ftn:FTN_1402"/>
<dbReference type="KEGG" id="ftx:AW25_601"/>
<dbReference type="BioCyc" id="FTUL401614:G1G75-1449-MONOMER"/>
<dbReference type="Proteomes" id="UP000000762">
    <property type="component" value="Chromosome"/>
</dbReference>
<dbReference type="GO" id="GO:0005737">
    <property type="term" value="C:cytoplasm"/>
    <property type="evidence" value="ECO:0007669"/>
    <property type="project" value="UniProtKB-SubCell"/>
</dbReference>
<dbReference type="GO" id="GO:0005524">
    <property type="term" value="F:ATP binding"/>
    <property type="evidence" value="ECO:0007669"/>
    <property type="project" value="UniProtKB-KW"/>
</dbReference>
<dbReference type="GO" id="GO:0046872">
    <property type="term" value="F:metal ion binding"/>
    <property type="evidence" value="ECO:0007669"/>
    <property type="project" value="UniProtKB-UniRule"/>
</dbReference>
<dbReference type="GO" id="GO:0051287">
    <property type="term" value="F:NAD binding"/>
    <property type="evidence" value="ECO:0007669"/>
    <property type="project" value="UniProtKB-ARBA"/>
</dbReference>
<dbReference type="GO" id="GO:0003951">
    <property type="term" value="F:NAD+ kinase activity"/>
    <property type="evidence" value="ECO:0007669"/>
    <property type="project" value="UniProtKB-UniRule"/>
</dbReference>
<dbReference type="GO" id="GO:0019674">
    <property type="term" value="P:NAD metabolic process"/>
    <property type="evidence" value="ECO:0007669"/>
    <property type="project" value="InterPro"/>
</dbReference>
<dbReference type="GO" id="GO:0006741">
    <property type="term" value="P:NADP biosynthetic process"/>
    <property type="evidence" value="ECO:0007669"/>
    <property type="project" value="UniProtKB-UniRule"/>
</dbReference>
<dbReference type="Gene3D" id="3.40.50.10330">
    <property type="entry name" value="Probable inorganic polyphosphate/atp-NAD kinase, domain 1"/>
    <property type="match status" value="1"/>
</dbReference>
<dbReference type="Gene3D" id="2.60.200.30">
    <property type="entry name" value="Probable inorganic polyphosphate/atp-NAD kinase, domain 2"/>
    <property type="match status" value="1"/>
</dbReference>
<dbReference type="HAMAP" id="MF_00361">
    <property type="entry name" value="NAD_kinase"/>
    <property type="match status" value="1"/>
</dbReference>
<dbReference type="InterPro" id="IPR017438">
    <property type="entry name" value="ATP-NAD_kinase_N"/>
</dbReference>
<dbReference type="InterPro" id="IPR017437">
    <property type="entry name" value="ATP-NAD_kinase_PpnK-typ_C"/>
</dbReference>
<dbReference type="InterPro" id="IPR016064">
    <property type="entry name" value="NAD/diacylglycerol_kinase_sf"/>
</dbReference>
<dbReference type="InterPro" id="IPR002504">
    <property type="entry name" value="NADK"/>
</dbReference>
<dbReference type="PANTHER" id="PTHR20275">
    <property type="entry name" value="NAD KINASE"/>
    <property type="match status" value="1"/>
</dbReference>
<dbReference type="PANTHER" id="PTHR20275:SF0">
    <property type="entry name" value="NAD KINASE"/>
    <property type="match status" value="1"/>
</dbReference>
<dbReference type="Pfam" id="PF01513">
    <property type="entry name" value="NAD_kinase"/>
    <property type="match status" value="1"/>
</dbReference>
<dbReference type="Pfam" id="PF20143">
    <property type="entry name" value="NAD_kinase_C"/>
    <property type="match status" value="1"/>
</dbReference>
<dbReference type="SUPFAM" id="SSF111331">
    <property type="entry name" value="NAD kinase/diacylglycerol kinase-like"/>
    <property type="match status" value="1"/>
</dbReference>
<proteinExistence type="inferred from homology"/>
<organism>
    <name type="scientific">Francisella tularensis subsp. novicida (strain U112)</name>
    <dbReference type="NCBI Taxonomy" id="401614"/>
    <lineage>
        <taxon>Bacteria</taxon>
        <taxon>Pseudomonadati</taxon>
        <taxon>Pseudomonadota</taxon>
        <taxon>Gammaproteobacteria</taxon>
        <taxon>Thiotrichales</taxon>
        <taxon>Francisellaceae</taxon>
        <taxon>Francisella</taxon>
    </lineage>
</organism>
<name>NADK_FRATN</name>
<comment type="function">
    <text evidence="1">Involved in the regulation of the intracellular balance of NAD and NADP, and is a key enzyme in the biosynthesis of NADP. Catalyzes specifically the phosphorylation on 2'-hydroxyl of the adenosine moiety of NAD to yield NADP.</text>
</comment>
<comment type="catalytic activity">
    <reaction evidence="1">
        <text>NAD(+) + ATP = ADP + NADP(+) + H(+)</text>
        <dbReference type="Rhea" id="RHEA:18629"/>
        <dbReference type="ChEBI" id="CHEBI:15378"/>
        <dbReference type="ChEBI" id="CHEBI:30616"/>
        <dbReference type="ChEBI" id="CHEBI:57540"/>
        <dbReference type="ChEBI" id="CHEBI:58349"/>
        <dbReference type="ChEBI" id="CHEBI:456216"/>
        <dbReference type="EC" id="2.7.1.23"/>
    </reaction>
</comment>
<comment type="cofactor">
    <cofactor evidence="1">
        <name>a divalent metal cation</name>
        <dbReference type="ChEBI" id="CHEBI:60240"/>
    </cofactor>
</comment>
<comment type="subcellular location">
    <subcellularLocation>
        <location evidence="1">Cytoplasm</location>
    </subcellularLocation>
</comment>
<comment type="similarity">
    <text evidence="1">Belongs to the NAD kinase family.</text>
</comment>
<sequence length="296" mass="32468">MAFKYHKVAIIGKHYKKEVSQMVETLYAYLQQQGLEIIIENDTAVDTSLVNVAIASLKEIALRCDVAIVVGGDGNFLKASRLLALYSNIPVIGINKGKLGFLTTLAADDNALKNDLYAILKGDSSVTKMSMLKCRVDNNLRAPLEASIALNEIAITASRGLMFGLKVFIDGRYAFDQRGDGLIVSTPTGSTAHAMSAGGPILNPNQNSVVLVPICSHSLNSRPLVISDESVIDIYITDYNDPEPVLSIDGRHDTILKAHQKVTIQKARKKVTVLHTKDYNYYDTLREKLGWSKVLF</sequence>
<gene>
    <name evidence="1" type="primary">nadK</name>
    <name type="ordered locus">FTN_1402</name>
</gene>
<evidence type="ECO:0000255" key="1">
    <source>
        <dbReference type="HAMAP-Rule" id="MF_00361"/>
    </source>
</evidence>
<keyword id="KW-0067">ATP-binding</keyword>
<keyword id="KW-0963">Cytoplasm</keyword>
<keyword id="KW-0418">Kinase</keyword>
<keyword id="KW-0520">NAD</keyword>
<keyword id="KW-0521">NADP</keyword>
<keyword id="KW-0547">Nucleotide-binding</keyword>
<keyword id="KW-0808">Transferase</keyword>